<feature type="chain" id="PRO_0000104563" description="Serpentine receptor class gamma-14">
    <location>
        <begin position="1"/>
        <end position="326"/>
    </location>
</feature>
<feature type="transmembrane region" description="Helical" evidence="1">
    <location>
        <begin position="36"/>
        <end position="56"/>
    </location>
</feature>
<feature type="transmembrane region" description="Helical" evidence="1">
    <location>
        <begin position="67"/>
        <end position="83"/>
    </location>
</feature>
<feature type="transmembrane region" description="Helical" evidence="1">
    <location>
        <begin position="115"/>
        <end position="135"/>
    </location>
</feature>
<feature type="transmembrane region" description="Helical" evidence="1">
    <location>
        <begin position="156"/>
        <end position="176"/>
    </location>
</feature>
<feature type="transmembrane region" description="Helical" evidence="1">
    <location>
        <begin position="204"/>
        <end position="224"/>
    </location>
</feature>
<feature type="transmembrane region" description="Helical" evidence="1">
    <location>
        <begin position="243"/>
        <end position="263"/>
    </location>
</feature>
<feature type="transmembrane region" description="Helical" evidence="1">
    <location>
        <begin position="274"/>
        <end position="294"/>
    </location>
</feature>
<evidence type="ECO:0000255" key="1"/>
<evidence type="ECO:0000305" key="2"/>
<accession>P91275</accession>
<gene>
    <name type="primary">srg-14</name>
    <name type="ORF">F26B1.6</name>
</gene>
<name>SRG14_CAEEL</name>
<protein>
    <recommendedName>
        <fullName>Serpentine receptor class gamma-14</fullName>
        <shortName>Protein srg-14</shortName>
    </recommendedName>
</protein>
<organism>
    <name type="scientific">Caenorhabditis elegans</name>
    <dbReference type="NCBI Taxonomy" id="6239"/>
    <lineage>
        <taxon>Eukaryota</taxon>
        <taxon>Metazoa</taxon>
        <taxon>Ecdysozoa</taxon>
        <taxon>Nematoda</taxon>
        <taxon>Chromadorea</taxon>
        <taxon>Rhabditida</taxon>
        <taxon>Rhabditina</taxon>
        <taxon>Rhabditomorpha</taxon>
        <taxon>Rhabditoidea</taxon>
        <taxon>Rhabditidae</taxon>
        <taxon>Peloderinae</taxon>
        <taxon>Caenorhabditis</taxon>
    </lineage>
</organism>
<keyword id="KW-0472">Membrane</keyword>
<keyword id="KW-1185">Reference proteome</keyword>
<keyword id="KW-0812">Transmembrane</keyword>
<keyword id="KW-1133">Transmembrane helix</keyword>
<sequence length="326" mass="37265">MSDFSPDMKNLDIDPIPVDCDLSYNTNIEVLKFTAQIIYIITGIFLNSAVLGTILWRCREVYSTNSFFTLFSVDCIANISILITEGLFARFFIYFTPICPVLADYFQSPLVGFKIIMLLTHHVSICKSLLQVLLVLNRMTCVLFPITHDSIWRKSLKYVISAVFLIPFCADWNIAISRVYMQSTYGGFWVSYFKKVSWASQSRFQLVFIIIALSFTFICTAITLLKLPERSKEIEKAISNATVIISIGFTFKVLFQIYYSFFFSYTDASSPVYGFSFLALDFLTVGSPIVMICVSRNLRTHIFKSKRKNQTLSKMLTRTSGMVIAR</sequence>
<dbReference type="EMBL" id="FO080500">
    <property type="protein sequence ID" value="CCD64198.1"/>
    <property type="molecule type" value="Genomic_DNA"/>
</dbReference>
<dbReference type="PIR" id="T30166">
    <property type="entry name" value="T30166"/>
</dbReference>
<dbReference type="RefSeq" id="NP_491823.1">
    <property type="nucleotide sequence ID" value="NM_059422.2"/>
</dbReference>
<dbReference type="SMR" id="P91275"/>
<dbReference type="STRING" id="6239.F26B1.6.1"/>
<dbReference type="PaxDb" id="6239-F26B1.6"/>
<dbReference type="EnsemblMetazoa" id="F26B1.6.1">
    <property type="protein sequence ID" value="F26B1.6.1"/>
    <property type="gene ID" value="WBGene00005171"/>
</dbReference>
<dbReference type="GeneID" id="184958"/>
<dbReference type="KEGG" id="cel:CELE_F26B1.6"/>
<dbReference type="UCSC" id="F26B1.6">
    <property type="organism name" value="c. elegans"/>
</dbReference>
<dbReference type="AGR" id="WB:WBGene00005171"/>
<dbReference type="CTD" id="184958"/>
<dbReference type="WormBase" id="F26B1.6">
    <property type="protein sequence ID" value="CE09678"/>
    <property type="gene ID" value="WBGene00005171"/>
    <property type="gene designation" value="srg-14"/>
</dbReference>
<dbReference type="eggNOG" id="ENOG502TJEA">
    <property type="taxonomic scope" value="Eukaryota"/>
</dbReference>
<dbReference type="GeneTree" id="ENSGT00970000195841"/>
<dbReference type="HOGENOM" id="CLU_061253_1_0_1"/>
<dbReference type="InParanoid" id="P91275"/>
<dbReference type="OMA" id="YFKKVSW"/>
<dbReference type="OrthoDB" id="5861325at2759"/>
<dbReference type="PhylomeDB" id="P91275"/>
<dbReference type="PRO" id="PR:P91275"/>
<dbReference type="Proteomes" id="UP000001940">
    <property type="component" value="Chromosome I"/>
</dbReference>
<dbReference type="GO" id="GO:0016020">
    <property type="term" value="C:membrane"/>
    <property type="evidence" value="ECO:0007669"/>
    <property type="project" value="UniProtKB-SubCell"/>
</dbReference>
<dbReference type="GO" id="GO:0004888">
    <property type="term" value="F:transmembrane signaling receptor activity"/>
    <property type="evidence" value="ECO:0007669"/>
    <property type="project" value="InterPro"/>
</dbReference>
<dbReference type="GO" id="GO:0007606">
    <property type="term" value="P:sensory perception of chemical stimulus"/>
    <property type="evidence" value="ECO:0007669"/>
    <property type="project" value="InterPro"/>
</dbReference>
<dbReference type="Gene3D" id="1.20.1070.10">
    <property type="entry name" value="Rhodopsin 7-helix transmembrane proteins"/>
    <property type="match status" value="1"/>
</dbReference>
<dbReference type="InterPro" id="IPR000609">
    <property type="entry name" value="7TM_GPCR_serpentine_rcpt_Srg"/>
</dbReference>
<dbReference type="InterPro" id="IPR051119">
    <property type="entry name" value="Nematode_SR-like"/>
</dbReference>
<dbReference type="PANTHER" id="PTHR31627:SF12">
    <property type="entry name" value="SERPENTINE RECEPTOR CLASS GAMMA-11-RELATED"/>
    <property type="match status" value="1"/>
</dbReference>
<dbReference type="PANTHER" id="PTHR31627">
    <property type="entry name" value="SERPENTINE RECEPTOR CLASS GAMMA-RELATED"/>
    <property type="match status" value="1"/>
</dbReference>
<dbReference type="Pfam" id="PF02118">
    <property type="entry name" value="Srg"/>
    <property type="match status" value="1"/>
</dbReference>
<dbReference type="PRINTS" id="PR00698">
    <property type="entry name" value="TMPROTEINSRG"/>
</dbReference>
<dbReference type="SUPFAM" id="SSF81321">
    <property type="entry name" value="Family A G protein-coupled receptor-like"/>
    <property type="match status" value="1"/>
</dbReference>
<proteinExistence type="inferred from homology"/>
<comment type="subcellular location">
    <subcellularLocation>
        <location evidence="2">Membrane</location>
        <topology evidence="2">Multi-pass membrane protein</topology>
    </subcellularLocation>
</comment>
<comment type="similarity">
    <text evidence="2">Belongs to the nematode receptor-like protein srg family.</text>
</comment>
<reference key="1">
    <citation type="journal article" date="1998" name="Science">
        <title>Genome sequence of the nematode C. elegans: a platform for investigating biology.</title>
        <authorList>
            <consortium name="The C. elegans sequencing consortium"/>
        </authorList>
    </citation>
    <scope>NUCLEOTIDE SEQUENCE [LARGE SCALE GENOMIC DNA]</scope>
    <source>
        <strain>Bristol N2</strain>
    </source>
</reference>